<protein>
    <recommendedName>
        <fullName evidence="1">Small ribosomal subunit protein uS17</fullName>
    </recommendedName>
    <alternativeName>
        <fullName evidence="4">30S ribosomal protein S17</fullName>
    </alternativeName>
    <alternativeName>
        <fullName>BS16</fullName>
    </alternativeName>
</protein>
<organism>
    <name type="scientific">Bacillus subtilis (strain 168)</name>
    <dbReference type="NCBI Taxonomy" id="224308"/>
    <lineage>
        <taxon>Bacteria</taxon>
        <taxon>Bacillati</taxon>
        <taxon>Bacillota</taxon>
        <taxon>Bacilli</taxon>
        <taxon>Bacillales</taxon>
        <taxon>Bacillaceae</taxon>
        <taxon>Bacillus</taxon>
    </lineage>
</organism>
<name>RS17_BACSU</name>
<dbReference type="EMBL" id="X15664">
    <property type="protein sequence ID" value="CAA33700.1"/>
    <property type="molecule type" value="Genomic_DNA"/>
</dbReference>
<dbReference type="EMBL" id="L47971">
    <property type="protein sequence ID" value="AAB06808.1"/>
    <property type="molecule type" value="Genomic_DNA"/>
</dbReference>
<dbReference type="EMBL" id="AL009126">
    <property type="protein sequence ID" value="CAB11901.1"/>
    <property type="molecule type" value="Genomic_DNA"/>
</dbReference>
<dbReference type="PIR" id="S05991">
    <property type="entry name" value="R3BS17"/>
</dbReference>
<dbReference type="RefSeq" id="NP_388006.1">
    <property type="nucleotide sequence ID" value="NC_000964.3"/>
</dbReference>
<dbReference type="RefSeq" id="WP_003225804.1">
    <property type="nucleotide sequence ID" value="NZ_OZ025638.1"/>
</dbReference>
<dbReference type="PDB" id="3J9W">
    <property type="method" value="EM"/>
    <property type="resolution" value="3.90 A"/>
    <property type="chains" value="AQ=1-87"/>
</dbReference>
<dbReference type="PDB" id="5NJT">
    <property type="method" value="EM"/>
    <property type="resolution" value="3.80 A"/>
    <property type="chains" value="Q=2-87"/>
</dbReference>
<dbReference type="PDB" id="6HA1">
    <property type="method" value="EM"/>
    <property type="resolution" value="3.10 A"/>
    <property type="chains" value="q=1-87"/>
</dbReference>
<dbReference type="PDB" id="6HA8">
    <property type="method" value="EM"/>
    <property type="resolution" value="3.50 A"/>
    <property type="chains" value="q=1-87"/>
</dbReference>
<dbReference type="PDB" id="6HTQ">
    <property type="method" value="EM"/>
    <property type="resolution" value="4.50 A"/>
    <property type="chains" value="q=2-85"/>
</dbReference>
<dbReference type="PDB" id="7O5B">
    <property type="method" value="EM"/>
    <property type="resolution" value="3.33 A"/>
    <property type="chains" value="Q=1-87"/>
</dbReference>
<dbReference type="PDB" id="7QGU">
    <property type="method" value="EM"/>
    <property type="resolution" value="4.75 A"/>
    <property type="chains" value="v=1-87"/>
</dbReference>
<dbReference type="PDB" id="7QH4">
    <property type="method" value="EM"/>
    <property type="resolution" value="5.45 A"/>
    <property type="chains" value="u=1-87"/>
</dbReference>
<dbReference type="PDB" id="7QV1">
    <property type="method" value="EM"/>
    <property type="resolution" value="3.50 A"/>
    <property type="chains" value="q=1-87"/>
</dbReference>
<dbReference type="PDB" id="7QV2">
    <property type="method" value="EM"/>
    <property type="resolution" value="3.50 A"/>
    <property type="chains" value="q=1-87"/>
</dbReference>
<dbReference type="PDB" id="7QV3">
    <property type="method" value="EM"/>
    <property type="resolution" value="5.14 A"/>
    <property type="chains" value="q=1-87"/>
</dbReference>
<dbReference type="PDB" id="8BUU">
    <property type="method" value="EM"/>
    <property type="resolution" value="2.90 A"/>
    <property type="chains" value="q=1-87"/>
</dbReference>
<dbReference type="PDB" id="8CDU">
    <property type="method" value="EM"/>
    <property type="resolution" value="3.10 A"/>
    <property type="chains" value="Q=1-87"/>
</dbReference>
<dbReference type="PDB" id="8CDV">
    <property type="method" value="EM"/>
    <property type="resolution" value="4.73 A"/>
    <property type="chains" value="Q=1-87"/>
</dbReference>
<dbReference type="PDB" id="8CEC">
    <property type="method" value="EM"/>
    <property type="resolution" value="3.57 A"/>
    <property type="chains" value="Q=1-87"/>
</dbReference>
<dbReference type="PDB" id="8CED">
    <property type="method" value="EM"/>
    <property type="resolution" value="4.15 A"/>
    <property type="chains" value="Q=1-87"/>
</dbReference>
<dbReference type="PDB" id="8CEE">
    <property type="method" value="EM"/>
    <property type="resolution" value="3.70 A"/>
    <property type="chains" value="Q=1-87"/>
</dbReference>
<dbReference type="PDB" id="8QCQ">
    <property type="method" value="EM"/>
    <property type="resolution" value="2.30 A"/>
    <property type="chains" value="q=1-87"/>
</dbReference>
<dbReference type="PDB" id="8QPP">
    <property type="method" value="EM"/>
    <property type="resolution" value="3.40 A"/>
    <property type="chains" value="Q=1-87"/>
</dbReference>
<dbReference type="PDB" id="8R55">
    <property type="method" value="EM"/>
    <property type="resolution" value="3.57 A"/>
    <property type="chains" value="Q=1-87"/>
</dbReference>
<dbReference type="PDBsum" id="3J9W"/>
<dbReference type="PDBsum" id="5NJT"/>
<dbReference type="PDBsum" id="6HA1"/>
<dbReference type="PDBsum" id="6HA8"/>
<dbReference type="PDBsum" id="6HTQ"/>
<dbReference type="PDBsum" id="7O5B"/>
<dbReference type="PDBsum" id="7QGU"/>
<dbReference type="PDBsum" id="7QH4"/>
<dbReference type="PDBsum" id="7QV1"/>
<dbReference type="PDBsum" id="7QV2"/>
<dbReference type="PDBsum" id="7QV3"/>
<dbReference type="PDBsum" id="8BUU"/>
<dbReference type="PDBsum" id="8CDU"/>
<dbReference type="PDBsum" id="8CDV"/>
<dbReference type="PDBsum" id="8CEC"/>
<dbReference type="PDBsum" id="8CED"/>
<dbReference type="PDBsum" id="8CEE"/>
<dbReference type="PDBsum" id="8QCQ"/>
<dbReference type="PDBsum" id="8QPP"/>
<dbReference type="PDBsum" id="8R55"/>
<dbReference type="EMDB" id="EMD-0176"/>
<dbReference type="EMDB" id="EMD-0177"/>
<dbReference type="EMDB" id="EMD-0270"/>
<dbReference type="EMDB" id="EMD-12734"/>
<dbReference type="EMDB" id="EMD-14157"/>
<dbReference type="EMDB" id="EMD-14158"/>
<dbReference type="EMDB" id="EMD-14159"/>
<dbReference type="EMDB" id="EMD-16246"/>
<dbReference type="EMDB" id="EMD-16595"/>
<dbReference type="EMDB" id="EMD-16596"/>
<dbReference type="EMDB" id="EMD-16605"/>
<dbReference type="EMDB" id="EMD-16606"/>
<dbReference type="EMDB" id="EMD-16607"/>
<dbReference type="EMDB" id="EMD-18332"/>
<dbReference type="EMDB" id="EMD-3656"/>
<dbReference type="SMR" id="P12874"/>
<dbReference type="FunCoup" id="P12874">
    <property type="interactions" value="491"/>
</dbReference>
<dbReference type="STRING" id="224308.BSU01250"/>
<dbReference type="PaxDb" id="224308-BSU01250"/>
<dbReference type="EnsemblBacteria" id="CAB11901">
    <property type="protein sequence ID" value="CAB11901"/>
    <property type="gene ID" value="BSU_01250"/>
</dbReference>
<dbReference type="GeneID" id="86875477"/>
<dbReference type="GeneID" id="936805"/>
<dbReference type="KEGG" id="bsu:BSU01250"/>
<dbReference type="PATRIC" id="fig|224308.179.peg.128"/>
<dbReference type="eggNOG" id="COG0186">
    <property type="taxonomic scope" value="Bacteria"/>
</dbReference>
<dbReference type="InParanoid" id="P12874"/>
<dbReference type="OrthoDB" id="9811714at2"/>
<dbReference type="PhylomeDB" id="P12874"/>
<dbReference type="BioCyc" id="BSUB:BSU01250-MONOMER"/>
<dbReference type="Proteomes" id="UP000001570">
    <property type="component" value="Chromosome"/>
</dbReference>
<dbReference type="GO" id="GO:0022627">
    <property type="term" value="C:cytosolic small ribosomal subunit"/>
    <property type="evidence" value="ECO:0000318"/>
    <property type="project" value="GO_Central"/>
</dbReference>
<dbReference type="GO" id="GO:0019843">
    <property type="term" value="F:rRNA binding"/>
    <property type="evidence" value="ECO:0007669"/>
    <property type="project" value="UniProtKB-UniRule"/>
</dbReference>
<dbReference type="GO" id="GO:0003735">
    <property type="term" value="F:structural constituent of ribosome"/>
    <property type="evidence" value="ECO:0000318"/>
    <property type="project" value="GO_Central"/>
</dbReference>
<dbReference type="GO" id="GO:0006412">
    <property type="term" value="P:translation"/>
    <property type="evidence" value="ECO:0007669"/>
    <property type="project" value="UniProtKB-UniRule"/>
</dbReference>
<dbReference type="CDD" id="cd00364">
    <property type="entry name" value="Ribosomal_uS17"/>
    <property type="match status" value="1"/>
</dbReference>
<dbReference type="FunFam" id="2.40.50.140:FF:000026">
    <property type="entry name" value="30S ribosomal protein S17"/>
    <property type="match status" value="1"/>
</dbReference>
<dbReference type="Gene3D" id="2.40.50.140">
    <property type="entry name" value="Nucleic acid-binding proteins"/>
    <property type="match status" value="1"/>
</dbReference>
<dbReference type="HAMAP" id="MF_01345_B">
    <property type="entry name" value="Ribosomal_uS17_B"/>
    <property type="match status" value="1"/>
</dbReference>
<dbReference type="InterPro" id="IPR012340">
    <property type="entry name" value="NA-bd_OB-fold"/>
</dbReference>
<dbReference type="InterPro" id="IPR000266">
    <property type="entry name" value="Ribosomal_uS17"/>
</dbReference>
<dbReference type="InterPro" id="IPR019984">
    <property type="entry name" value="Ribosomal_uS17_bact/chlr"/>
</dbReference>
<dbReference type="InterPro" id="IPR019979">
    <property type="entry name" value="Ribosomal_uS17_CS"/>
</dbReference>
<dbReference type="NCBIfam" id="NF004123">
    <property type="entry name" value="PRK05610.1"/>
    <property type="match status" value="1"/>
</dbReference>
<dbReference type="NCBIfam" id="TIGR03635">
    <property type="entry name" value="uS17_bact"/>
    <property type="match status" value="1"/>
</dbReference>
<dbReference type="PANTHER" id="PTHR10744">
    <property type="entry name" value="40S RIBOSOMAL PROTEIN S11 FAMILY MEMBER"/>
    <property type="match status" value="1"/>
</dbReference>
<dbReference type="PANTHER" id="PTHR10744:SF1">
    <property type="entry name" value="SMALL RIBOSOMAL SUBUNIT PROTEIN US17M"/>
    <property type="match status" value="1"/>
</dbReference>
<dbReference type="Pfam" id="PF00366">
    <property type="entry name" value="Ribosomal_S17"/>
    <property type="match status" value="1"/>
</dbReference>
<dbReference type="PRINTS" id="PR00973">
    <property type="entry name" value="RIBOSOMALS17"/>
</dbReference>
<dbReference type="SUPFAM" id="SSF50249">
    <property type="entry name" value="Nucleic acid-binding proteins"/>
    <property type="match status" value="1"/>
</dbReference>
<dbReference type="PROSITE" id="PS00056">
    <property type="entry name" value="RIBOSOMAL_S17"/>
    <property type="match status" value="1"/>
</dbReference>
<gene>
    <name evidence="1" type="primary">rpsQ</name>
    <name type="ordered locus">BSU01250</name>
</gene>
<comment type="function">
    <text evidence="1">One of the primary rRNA binding proteins, it binds specifically to the 5'-end of 16S ribosomal RNA.</text>
</comment>
<comment type="subunit">
    <text evidence="2">Part of the 30S ribosomal subunit.</text>
</comment>
<comment type="similarity">
    <text evidence="1">Belongs to the universal ribosomal protein uS17 family.</text>
</comment>
<evidence type="ECO:0000255" key="1">
    <source>
        <dbReference type="HAMAP-Rule" id="MF_01345"/>
    </source>
</evidence>
<evidence type="ECO:0000269" key="2">
    <source>
    </source>
</evidence>
<evidence type="ECO:0000269" key="3">
    <source>
    </source>
</evidence>
<evidence type="ECO:0000305" key="4"/>
<evidence type="ECO:0007744" key="5">
    <source>
        <dbReference type="PDB" id="6HA1"/>
    </source>
</evidence>
<evidence type="ECO:0007744" key="6">
    <source>
        <dbReference type="PDB" id="6HA8"/>
    </source>
</evidence>
<evidence type="ECO:0007829" key="7">
    <source>
        <dbReference type="PDB" id="8CDU"/>
    </source>
</evidence>
<feature type="initiator methionine" description="Removed" evidence="3">
    <location>
        <position position="1"/>
    </location>
</feature>
<feature type="chain" id="PRO_0000128447" description="Small ribosomal subunit protein uS17">
    <location>
        <begin position="2"/>
        <end position="87"/>
    </location>
</feature>
<feature type="sequence conflict" description="In Ref. 2; AAB06808." evidence="4" ref="2">
    <original>E</original>
    <variation>ECE</variation>
    <location>
        <position position="3"/>
    </location>
</feature>
<feature type="sequence conflict" description="In Ref. 4; AA sequence." evidence="4" ref="4">
    <original>T</original>
    <variation>G</variation>
    <location>
        <position position="24"/>
    </location>
</feature>
<feature type="strand" evidence="7">
    <location>
        <begin position="9"/>
        <end position="14"/>
    </location>
</feature>
<feature type="strand" evidence="7">
    <location>
        <begin position="22"/>
        <end position="32"/>
    </location>
</feature>
<feature type="turn" evidence="7">
    <location>
        <begin position="34"/>
        <end position="36"/>
    </location>
</feature>
<feature type="strand" evidence="7">
    <location>
        <begin position="39"/>
        <end position="49"/>
    </location>
</feature>
<feature type="strand" evidence="7">
    <location>
        <begin position="60"/>
        <end position="65"/>
    </location>
</feature>
<feature type="strand" evidence="7">
    <location>
        <begin position="70"/>
        <end position="72"/>
    </location>
</feature>
<feature type="strand" evidence="7">
    <location>
        <begin position="75"/>
        <end position="82"/>
    </location>
</feature>
<proteinExistence type="evidence at protein level"/>
<keyword id="KW-0002">3D-structure</keyword>
<keyword id="KW-0903">Direct protein sequencing</keyword>
<keyword id="KW-1185">Reference proteome</keyword>
<keyword id="KW-0687">Ribonucleoprotein</keyword>
<keyword id="KW-0689">Ribosomal protein</keyword>
<keyword id="KW-0694">RNA-binding</keyword>
<keyword id="KW-0699">rRNA-binding</keyword>
<accession>P12874</accession>
<sequence length="87" mass="10199">MSERNQRKVYQGRVVSDKMDKTITVVVETYKKHTLYGKRVKYSKKFKAHDENNQAKIGDIVKIMETRPLSATKRFRLVEVVEEAVII</sequence>
<reference key="1">
    <citation type="journal article" date="1989" name="Nucleic Acids Res.">
        <title>Cloning and analysis of the spc ribosomal protein operon of Bacillus subtilis: comparison with the spc operon of Escherichia coli.</title>
        <authorList>
            <person name="Henkin T.M."/>
            <person name="Moon S.H."/>
            <person name="Mattheakis L.C."/>
            <person name="Nomura M."/>
        </authorList>
    </citation>
    <scope>NUCLEOTIDE SEQUENCE [GENOMIC DNA]</scope>
    <source>
        <strain>168</strain>
    </source>
</reference>
<reference key="2">
    <citation type="journal article" date="1996" name="Gene">
        <title>Genetic and transcriptional organization of the Bacillus subtilis spc-alpha region.</title>
        <authorList>
            <person name="Suh J.-W."/>
            <person name="Boylan S.A."/>
            <person name="Oh S.H."/>
            <person name="Price C.W."/>
        </authorList>
    </citation>
    <scope>NUCLEOTIDE SEQUENCE [GENOMIC DNA]</scope>
    <source>
        <strain>168 / Marburg / ATCC 6051 / DSM 10 / JCM 1465 / NBRC 13719 / NCIMB 3610 / NRRL NRS-744 / VKM B-501</strain>
    </source>
</reference>
<reference key="3">
    <citation type="journal article" date="1997" name="Nature">
        <title>The complete genome sequence of the Gram-positive bacterium Bacillus subtilis.</title>
        <authorList>
            <person name="Kunst F."/>
            <person name="Ogasawara N."/>
            <person name="Moszer I."/>
            <person name="Albertini A.M."/>
            <person name="Alloni G."/>
            <person name="Azevedo V."/>
            <person name="Bertero M.G."/>
            <person name="Bessieres P."/>
            <person name="Bolotin A."/>
            <person name="Borchert S."/>
            <person name="Borriss R."/>
            <person name="Boursier L."/>
            <person name="Brans A."/>
            <person name="Braun M."/>
            <person name="Brignell S.C."/>
            <person name="Bron S."/>
            <person name="Brouillet S."/>
            <person name="Bruschi C.V."/>
            <person name="Caldwell B."/>
            <person name="Capuano V."/>
            <person name="Carter N.M."/>
            <person name="Choi S.-K."/>
            <person name="Codani J.-J."/>
            <person name="Connerton I.F."/>
            <person name="Cummings N.J."/>
            <person name="Daniel R.A."/>
            <person name="Denizot F."/>
            <person name="Devine K.M."/>
            <person name="Duesterhoeft A."/>
            <person name="Ehrlich S.D."/>
            <person name="Emmerson P.T."/>
            <person name="Entian K.-D."/>
            <person name="Errington J."/>
            <person name="Fabret C."/>
            <person name="Ferrari E."/>
            <person name="Foulger D."/>
            <person name="Fritz C."/>
            <person name="Fujita M."/>
            <person name="Fujita Y."/>
            <person name="Fuma S."/>
            <person name="Galizzi A."/>
            <person name="Galleron N."/>
            <person name="Ghim S.-Y."/>
            <person name="Glaser P."/>
            <person name="Goffeau A."/>
            <person name="Golightly E.J."/>
            <person name="Grandi G."/>
            <person name="Guiseppi G."/>
            <person name="Guy B.J."/>
            <person name="Haga K."/>
            <person name="Haiech J."/>
            <person name="Harwood C.R."/>
            <person name="Henaut A."/>
            <person name="Hilbert H."/>
            <person name="Holsappel S."/>
            <person name="Hosono S."/>
            <person name="Hullo M.-F."/>
            <person name="Itaya M."/>
            <person name="Jones L.-M."/>
            <person name="Joris B."/>
            <person name="Karamata D."/>
            <person name="Kasahara Y."/>
            <person name="Klaerr-Blanchard M."/>
            <person name="Klein C."/>
            <person name="Kobayashi Y."/>
            <person name="Koetter P."/>
            <person name="Koningstein G."/>
            <person name="Krogh S."/>
            <person name="Kumano M."/>
            <person name="Kurita K."/>
            <person name="Lapidus A."/>
            <person name="Lardinois S."/>
            <person name="Lauber J."/>
            <person name="Lazarevic V."/>
            <person name="Lee S.-M."/>
            <person name="Levine A."/>
            <person name="Liu H."/>
            <person name="Masuda S."/>
            <person name="Mauel C."/>
            <person name="Medigue C."/>
            <person name="Medina N."/>
            <person name="Mellado R.P."/>
            <person name="Mizuno M."/>
            <person name="Moestl D."/>
            <person name="Nakai S."/>
            <person name="Noback M."/>
            <person name="Noone D."/>
            <person name="O'Reilly M."/>
            <person name="Ogawa K."/>
            <person name="Ogiwara A."/>
            <person name="Oudega B."/>
            <person name="Park S.-H."/>
            <person name="Parro V."/>
            <person name="Pohl T.M."/>
            <person name="Portetelle D."/>
            <person name="Porwollik S."/>
            <person name="Prescott A.M."/>
            <person name="Presecan E."/>
            <person name="Pujic P."/>
            <person name="Purnelle B."/>
            <person name="Rapoport G."/>
            <person name="Rey M."/>
            <person name="Reynolds S."/>
            <person name="Rieger M."/>
            <person name="Rivolta C."/>
            <person name="Rocha E."/>
            <person name="Roche B."/>
            <person name="Rose M."/>
            <person name="Sadaie Y."/>
            <person name="Sato T."/>
            <person name="Scanlan E."/>
            <person name="Schleich S."/>
            <person name="Schroeter R."/>
            <person name="Scoffone F."/>
            <person name="Sekiguchi J."/>
            <person name="Sekowska A."/>
            <person name="Seror S.J."/>
            <person name="Serror P."/>
            <person name="Shin B.-S."/>
            <person name="Soldo B."/>
            <person name="Sorokin A."/>
            <person name="Tacconi E."/>
            <person name="Takagi T."/>
            <person name="Takahashi H."/>
            <person name="Takemaru K."/>
            <person name="Takeuchi M."/>
            <person name="Tamakoshi A."/>
            <person name="Tanaka T."/>
            <person name="Terpstra P."/>
            <person name="Tognoni A."/>
            <person name="Tosato V."/>
            <person name="Uchiyama S."/>
            <person name="Vandenbol M."/>
            <person name="Vannier F."/>
            <person name="Vassarotti A."/>
            <person name="Viari A."/>
            <person name="Wambutt R."/>
            <person name="Wedler E."/>
            <person name="Wedler H."/>
            <person name="Weitzenegger T."/>
            <person name="Winters P."/>
            <person name="Wipat A."/>
            <person name="Yamamoto H."/>
            <person name="Yamane K."/>
            <person name="Yasumoto K."/>
            <person name="Yata K."/>
            <person name="Yoshida K."/>
            <person name="Yoshikawa H.-F."/>
            <person name="Zumstein E."/>
            <person name="Yoshikawa H."/>
            <person name="Danchin A."/>
        </authorList>
    </citation>
    <scope>NUCLEOTIDE SEQUENCE [LARGE SCALE GENOMIC DNA]</scope>
    <source>
        <strain>168</strain>
    </source>
</reference>
<reference key="4">
    <citation type="journal article" date="1982" name="Mol. Gen. Genet.">
        <title>Purification and characterization of 30S ribosomal proteins from Bacillus subtilis: correlation to Escherichia coli 30S proteins.</title>
        <authorList>
            <person name="Higo K."/>
            <person name="Otaka E."/>
            <person name="Osawa S."/>
        </authorList>
    </citation>
    <scope>PROTEIN SEQUENCE OF 2-38</scope>
</reference>
<reference evidence="5 6" key="5">
    <citation type="journal article" date="2018" name="Proc. Natl. Acad. Sci. U.S.A.">
        <title>Structural basis for antibiotic resistance mediated by the Bacillus subtilis ABCF ATPase VmlR.</title>
        <authorList>
            <person name="Crowe-McAuliffe C."/>
            <person name="Graf M."/>
            <person name="Huter P."/>
            <person name="Takada H."/>
            <person name="Abdelshahid M."/>
            <person name="Novacek J."/>
            <person name="Murina V."/>
            <person name="Atkinson G.C."/>
            <person name="Hauryliuk V."/>
            <person name="Wilson D.N."/>
        </authorList>
    </citation>
    <scope>STRUCTURE BY ELECTRON MICROSCOPY (3.10 ANGSTROMS) OF 1-87 WITH AND WITHOUT VIRGINIAMYCIN M</scope>
    <scope>SUBUNIT</scope>
</reference>